<reference key="1">
    <citation type="journal article" date="1984" name="Comp. Biochem. Physiol.">
        <title>Active peptides in the skins of one hundred amphibian species from Australia and Papua New Guinea.</title>
        <authorList>
            <person name="Erspamer V."/>
            <person name="Erspamer G.F."/>
            <person name="Mazzanti G."/>
            <person name="Endean R."/>
        </authorList>
    </citation>
    <scope>PROTEIN SEQUENCE</scope>
    <scope>PYROGLUTAMATE FORMATION AT GLN-1</scope>
    <scope>AMIDATION AT MET-11</scope>
    <source>
        <tissue>Skin secretion</tissue>
    </source>
</reference>
<protein>
    <recommendedName>
        <fullName>Ranatensin-C</fullName>
    </recommendedName>
</protein>
<name>RANC_LITPI</name>
<organism>
    <name type="scientific">Lithobates pipiens</name>
    <name type="common">Northern leopard frog</name>
    <name type="synonym">Rana pipiens</name>
    <dbReference type="NCBI Taxonomy" id="8404"/>
    <lineage>
        <taxon>Eukaryota</taxon>
        <taxon>Metazoa</taxon>
        <taxon>Chordata</taxon>
        <taxon>Craniata</taxon>
        <taxon>Vertebrata</taxon>
        <taxon>Euteleostomi</taxon>
        <taxon>Amphibia</taxon>
        <taxon>Batrachia</taxon>
        <taxon>Anura</taxon>
        <taxon>Neobatrachia</taxon>
        <taxon>Ranoidea</taxon>
        <taxon>Ranidae</taxon>
        <taxon>Lithobates</taxon>
    </lineage>
</organism>
<sequence>QTPQWATGHFM</sequence>
<evidence type="ECO:0000269" key="1">
    <source>
    </source>
</evidence>
<evidence type="ECO:0000305" key="2"/>
<dbReference type="GO" id="GO:0005576">
    <property type="term" value="C:extracellular region"/>
    <property type="evidence" value="ECO:0007669"/>
    <property type="project" value="UniProtKB-SubCell"/>
</dbReference>
<dbReference type="GO" id="GO:0006952">
    <property type="term" value="P:defense response"/>
    <property type="evidence" value="ECO:0007669"/>
    <property type="project" value="UniProtKB-KW"/>
</dbReference>
<dbReference type="GO" id="GO:0007218">
    <property type="term" value="P:neuropeptide signaling pathway"/>
    <property type="evidence" value="ECO:0007669"/>
    <property type="project" value="InterPro"/>
</dbReference>
<dbReference type="InterPro" id="IPR000874">
    <property type="entry name" value="Bombesin"/>
</dbReference>
<dbReference type="PROSITE" id="PS00257">
    <property type="entry name" value="BOMBESIN"/>
    <property type="match status" value="1"/>
</dbReference>
<feature type="peptide" id="PRO_0000043495" description="Ranatensin-C">
    <location>
        <begin position="1"/>
        <end position="11"/>
    </location>
</feature>
<feature type="modified residue" description="Pyrrolidone carboxylic acid" evidence="1">
    <location>
        <position position="1"/>
    </location>
</feature>
<feature type="modified residue" description="Methionine amide" evidence="1">
    <location>
        <position position="11"/>
    </location>
</feature>
<proteinExistence type="evidence at protein level"/>
<accession>P08951</accession>
<comment type="subcellular location">
    <subcellularLocation>
        <location>Secreted</location>
    </subcellularLocation>
</comment>
<comment type="tissue specificity">
    <text>Expressed by the skin glands.</text>
</comment>
<comment type="similarity">
    <text evidence="2">Belongs to the bombesin/neuromedin-B/ranatensin family.</text>
</comment>
<keyword id="KW-0027">Amidation</keyword>
<keyword id="KW-0878">Amphibian defense peptide</keyword>
<keyword id="KW-0903">Direct protein sequencing</keyword>
<keyword id="KW-0873">Pyrrolidone carboxylic acid</keyword>
<keyword id="KW-0964">Secreted</keyword>